<accession>Q2YTI5</accession>
<name>PEPVL_STAAB</name>
<dbReference type="EC" id="3.4.13.-"/>
<dbReference type="EMBL" id="AJ938182">
    <property type="protein sequence ID" value="CAI81300.1"/>
    <property type="molecule type" value="Genomic_DNA"/>
</dbReference>
<dbReference type="RefSeq" id="WP_000265413.1">
    <property type="nucleotide sequence ID" value="NC_007622.1"/>
</dbReference>
<dbReference type="SMR" id="Q2YTI5"/>
<dbReference type="KEGG" id="sab:SAB1611c"/>
<dbReference type="HOGENOM" id="CLU_031786_2_0_9"/>
<dbReference type="GO" id="GO:0008777">
    <property type="term" value="F:acetylornithine deacetylase activity"/>
    <property type="evidence" value="ECO:0007669"/>
    <property type="project" value="TreeGrafter"/>
</dbReference>
<dbReference type="GO" id="GO:0016805">
    <property type="term" value="F:dipeptidase activity"/>
    <property type="evidence" value="ECO:0007669"/>
    <property type="project" value="UniProtKB-KW"/>
</dbReference>
<dbReference type="GO" id="GO:0008237">
    <property type="term" value="F:metallopeptidase activity"/>
    <property type="evidence" value="ECO:0007669"/>
    <property type="project" value="UniProtKB-KW"/>
</dbReference>
<dbReference type="GO" id="GO:0008270">
    <property type="term" value="F:zinc ion binding"/>
    <property type="evidence" value="ECO:0007669"/>
    <property type="project" value="InterPro"/>
</dbReference>
<dbReference type="GO" id="GO:0006526">
    <property type="term" value="P:L-arginine biosynthetic process"/>
    <property type="evidence" value="ECO:0007669"/>
    <property type="project" value="TreeGrafter"/>
</dbReference>
<dbReference type="GO" id="GO:0006508">
    <property type="term" value="P:proteolysis"/>
    <property type="evidence" value="ECO:0007669"/>
    <property type="project" value="UniProtKB-KW"/>
</dbReference>
<dbReference type="CDD" id="cd03888">
    <property type="entry name" value="M20_PepV"/>
    <property type="match status" value="1"/>
</dbReference>
<dbReference type="Gene3D" id="3.30.70.360">
    <property type="match status" value="2"/>
</dbReference>
<dbReference type="Gene3D" id="3.40.630.10">
    <property type="entry name" value="Zn peptidases"/>
    <property type="match status" value="1"/>
</dbReference>
<dbReference type="InterPro" id="IPR036264">
    <property type="entry name" value="Bact_exopeptidase_dim_dom"/>
</dbReference>
<dbReference type="InterPro" id="IPR010964">
    <property type="entry name" value="M20A_pepV-rel"/>
</dbReference>
<dbReference type="InterPro" id="IPR002933">
    <property type="entry name" value="Peptidase_M20"/>
</dbReference>
<dbReference type="InterPro" id="IPR050072">
    <property type="entry name" value="Peptidase_M20A"/>
</dbReference>
<dbReference type="NCBIfam" id="TIGR01887">
    <property type="entry name" value="dipeptidaselike"/>
    <property type="match status" value="1"/>
</dbReference>
<dbReference type="NCBIfam" id="NF005591">
    <property type="entry name" value="PRK07318.1"/>
    <property type="match status" value="1"/>
</dbReference>
<dbReference type="PANTHER" id="PTHR43808">
    <property type="entry name" value="ACETYLORNITHINE DEACETYLASE"/>
    <property type="match status" value="1"/>
</dbReference>
<dbReference type="PANTHER" id="PTHR43808:SF31">
    <property type="entry name" value="N-ACETYL-L-CITRULLINE DEACETYLASE"/>
    <property type="match status" value="1"/>
</dbReference>
<dbReference type="Pfam" id="PF01546">
    <property type="entry name" value="Peptidase_M20"/>
    <property type="match status" value="1"/>
</dbReference>
<dbReference type="SUPFAM" id="SSF55031">
    <property type="entry name" value="Bacterial exopeptidase dimerisation domain"/>
    <property type="match status" value="1"/>
</dbReference>
<dbReference type="SUPFAM" id="SSF53187">
    <property type="entry name" value="Zn-dependent exopeptidases"/>
    <property type="match status" value="1"/>
</dbReference>
<reference key="1">
    <citation type="journal article" date="2007" name="PLoS ONE">
        <title>Molecular correlates of host specialization in Staphylococcus aureus.</title>
        <authorList>
            <person name="Herron-Olson L."/>
            <person name="Fitzgerald J.R."/>
            <person name="Musser J.M."/>
            <person name="Kapur V."/>
        </authorList>
    </citation>
    <scope>NUCLEOTIDE SEQUENCE [LARGE SCALE GENOMIC DNA]</scope>
    <source>
        <strain>bovine RF122 / ET3-1</strain>
    </source>
</reference>
<comment type="cofactor">
    <cofactor evidence="1">
        <name>Zn(2+)</name>
        <dbReference type="ChEBI" id="CHEBI:29105"/>
    </cofactor>
    <text evidence="1">Binds 2 Zn(2+) ions per subunit.</text>
</comment>
<comment type="similarity">
    <text evidence="2">Belongs to the peptidase M20A family.</text>
</comment>
<protein>
    <recommendedName>
        <fullName>Putative dipeptidase SAB1611c</fullName>
        <ecNumber>3.4.13.-</ecNumber>
    </recommendedName>
</protein>
<proteinExistence type="inferred from homology"/>
<gene>
    <name type="ordered locus">SAB1611c</name>
</gene>
<sequence length="469" mass="52784">MWKEKVQQYEDQIINDLKGLLAIESVRDDAKASEDAPVGPGPRKALDYMYEIAHRDGFTTHDVDHIAGRIEAGKGNDVLGILCHVDVVPAGDGWDSNPFEPVVTEDAIIARGTLDDKGPTIAAYYAIKILEDMNVDWKKRIHMIIGTDEESDWKCTDRYFKTEEMPTLGFAPDAEFPCIHGEKGITTFDLVQNKLAEDQDESDYELITFKSGERYNMVPDHAEARVLVKENMTDVIQDFEYFLEQNHLQGDSTVDSGILVLTVEGKAVHGMDPSIGVNAGLYLLKFLASLNLDNNAQAFVAFSNRYLFNSDFGEKMGMKFHTDVMGDVTTNIGVITYDNENAGLFGINLRYPEGFEFEKAMDRFANEIQQYGFEVKLGKVQPPHYVDKNDPFVQKLVTAYRNQTNDMTEPYTIGGGTYARNLDKGVAFGAMFSDSEDLMHQKNEYITKKQLFNATSIYLEAIYSLCVEE</sequence>
<organism>
    <name type="scientific">Staphylococcus aureus (strain bovine RF122 / ET3-1)</name>
    <dbReference type="NCBI Taxonomy" id="273036"/>
    <lineage>
        <taxon>Bacteria</taxon>
        <taxon>Bacillati</taxon>
        <taxon>Bacillota</taxon>
        <taxon>Bacilli</taxon>
        <taxon>Bacillales</taxon>
        <taxon>Staphylococcaceae</taxon>
        <taxon>Staphylococcus</taxon>
    </lineage>
</organism>
<keyword id="KW-0224">Dipeptidase</keyword>
<keyword id="KW-0378">Hydrolase</keyword>
<keyword id="KW-0479">Metal-binding</keyword>
<keyword id="KW-0482">Metalloprotease</keyword>
<keyword id="KW-0645">Protease</keyword>
<keyword id="KW-0862">Zinc</keyword>
<feature type="chain" id="PRO_0000282628" description="Putative dipeptidase SAB1611c">
    <location>
        <begin position="1"/>
        <end position="469"/>
    </location>
</feature>
<feature type="active site" evidence="1">
    <location>
        <position position="86"/>
    </location>
</feature>
<feature type="active site" description="Proton acceptor" evidence="1">
    <location>
        <position position="149"/>
    </location>
</feature>
<feature type="binding site" evidence="1">
    <location>
        <position position="84"/>
    </location>
    <ligand>
        <name>Zn(2+)</name>
        <dbReference type="ChEBI" id="CHEBI:29105"/>
        <label>2</label>
    </ligand>
</feature>
<feature type="binding site" evidence="1">
    <location>
        <position position="115"/>
    </location>
    <ligand>
        <name>Zn(2+)</name>
        <dbReference type="ChEBI" id="CHEBI:29105"/>
        <label>1</label>
    </ligand>
</feature>
<feature type="binding site" evidence="1">
    <location>
        <position position="115"/>
    </location>
    <ligand>
        <name>Zn(2+)</name>
        <dbReference type="ChEBI" id="CHEBI:29105"/>
        <label>2</label>
    </ligand>
</feature>
<feature type="binding site" evidence="1">
    <location>
        <position position="150"/>
    </location>
    <ligand>
        <name>Zn(2+)</name>
        <dbReference type="ChEBI" id="CHEBI:29105"/>
        <label>1</label>
    </ligand>
</feature>
<feature type="binding site" evidence="1">
    <location>
        <position position="173"/>
    </location>
    <ligand>
        <name>Zn(2+)</name>
        <dbReference type="ChEBI" id="CHEBI:29105"/>
        <label>2</label>
    </ligand>
</feature>
<feature type="binding site" evidence="1">
    <location>
        <position position="440"/>
    </location>
    <ligand>
        <name>Zn(2+)</name>
        <dbReference type="ChEBI" id="CHEBI:29105"/>
        <label>1</label>
    </ligand>
</feature>
<evidence type="ECO:0000250" key="1"/>
<evidence type="ECO:0000305" key="2"/>